<keyword id="KW-0175">Coiled coil</keyword>
<keyword id="KW-0477">Merozoite</keyword>
<keyword id="KW-1185">Reference proteome</keyword>
<keyword id="KW-0677">Repeat</keyword>
<gene>
    <name type="ORF">PF07_0014</name>
    <name type="ORF">PF3D7_0703800</name>
</gene>
<comment type="biotechnology">
    <text evidence="3">Possible candidate for an effective malaria vaccine as determined by epitope response in sera.</text>
</comment>
<protein>
    <recommendedName>
        <fullName>Leucine-rich repeat and coiled-coil domain-containing protein PF3D7_0703800</fullName>
    </recommendedName>
</protein>
<feature type="chain" id="PRO_0000365116" description="Leucine-rich repeat and coiled-coil domain-containing protein PF3D7_0703800">
    <location>
        <begin position="1"/>
        <end position="1058"/>
    </location>
</feature>
<feature type="region of interest" description="Disordered" evidence="2">
    <location>
        <begin position="1"/>
        <end position="34"/>
    </location>
</feature>
<feature type="region of interest" description="Disordered" evidence="2">
    <location>
        <begin position="641"/>
        <end position="665"/>
    </location>
</feature>
<feature type="region of interest" description="Disordered" evidence="2">
    <location>
        <begin position="706"/>
        <end position="728"/>
    </location>
</feature>
<feature type="coiled-coil region" evidence="1">
    <location>
        <begin position="515"/>
        <end position="544"/>
    </location>
</feature>
<feature type="coiled-coil region" evidence="1">
    <location>
        <begin position="872"/>
        <end position="905"/>
    </location>
</feature>
<feature type="compositionally biased region" description="Basic residues" evidence="2">
    <location>
        <begin position="1"/>
        <end position="10"/>
    </location>
</feature>
<feature type="compositionally biased region" description="Basic and acidic residues" evidence="2">
    <location>
        <begin position="11"/>
        <end position="34"/>
    </location>
</feature>
<feature type="compositionally biased region" description="Basic and acidic residues" evidence="2">
    <location>
        <begin position="641"/>
        <end position="661"/>
    </location>
</feature>
<name>Y7014_PLAF7</name>
<proteinExistence type="evidence at protein level"/>
<sequence>MAIKKKKKETKSKDNNNDNLRNEKKSTNLENGKYDKKKVEIYEHGIGGITQNKNDNNKENAYDDDIYHDKSEHINVKYLNEKDYEIEKVSKRIYEENSKIKKISLHHKILKEELETKQLIEQNDKKKKNSLDYYKKVIIKLKNNINNMEEYTNNITNDINVLKAHIDDERNERIIYNNNMKILINEYNSLKKNIQDLNMQEKEQHKFNTKLKEELKELYKEKENMEKKHREDFKKLQQKIKEQKILSYENKINDLTKEKDKNKMENGEANKYEDKHNNNNIHNNNNIHNDNNICNDNNICNDNTIHNDNNICNDNNICNDNNICNDNNICNDNNIRNNNIISSNNKIHEKDNMINILNYYEDEKKKQLQNKIVMLKKLCLRILFINEYQIYNIKKLQENINNMNNAINSINLISYKKGDFDHIIINLNVSKEKNYSLISRINLLNYETNVLKQLIKKMKEKFKHLNLQNDEIINLKYDISNNMNEKMKHIKTSLLTNQETCNLKKKCFDDCLLYLKQLYTFIKNYENNNDKLNIKSQIINKDKNLHFNYIHKYNEDILVDENYINDFLIYIEKYIYSLNFYLPTQNFNYKKYLLHNGSIHNITLDTHASSKEYLQKEDSSEFNQHGHNLLRDSLNLNEQQENKDHLQHEEHTHEEEPKDANGDMVNIEDANGDMVNIEDANGDMVNIKDANGDMVNIKDTRGDIENIEDKSGDMENMKEPNGDMENMKEPNDDIQILKEPNDDIQILKEPNDDIQILKEPNDDIQILKEPNDDIQILKEPNDDIQILKEPNDDIQILKDPNDDIQILKEPNDDISTINNLTTHLSNENNLMTDLPKVDHKIKDEIQSEHILESTNISDDNINKENSLEIPLNYDHTQENILKNKNNMEDQNNLLEQNIMTDQLQNHKECEEFKPHDNKEKNNIINDDTKNLISDDTKNIISDDTKNIISNDTKKILSDDTKNIISDDTKNIINDDTKNISNDDIKNISNDDIKNIGNDNNKPYNEDHNIVTINDEKANYILNHFNSRNIEYDKLKEEIPNELLNIKYDSSKKSTISTN</sequence>
<evidence type="ECO:0000255" key="1"/>
<evidence type="ECO:0000256" key="2">
    <source>
        <dbReference type="SAM" id="MobiDB-lite"/>
    </source>
</evidence>
<evidence type="ECO:0000269" key="3">
    <source>
    </source>
</evidence>
<evidence type="ECO:0000305" key="4"/>
<dbReference type="EMBL" id="AL844506">
    <property type="protein sequence ID" value="VWP73979.1"/>
    <property type="molecule type" value="Genomic_DNA"/>
</dbReference>
<dbReference type="RefSeq" id="XP_001348971.1">
    <property type="nucleotide sequence ID" value="XM_001348935.1"/>
</dbReference>
<dbReference type="SMR" id="Q8IC32"/>
<dbReference type="FunCoup" id="Q8IC32">
    <property type="interactions" value="747"/>
</dbReference>
<dbReference type="PaxDb" id="5833-PF07_0014"/>
<dbReference type="EnsemblProtists" id="CAD50809">
    <property type="protein sequence ID" value="CAD50809"/>
    <property type="gene ID" value="PF3D7_0703800"/>
</dbReference>
<dbReference type="GeneID" id="2654981"/>
<dbReference type="KEGG" id="pfa:PF3D7_0703800"/>
<dbReference type="VEuPathDB" id="PlasmoDB:PF3D7_0703800"/>
<dbReference type="HOGENOM" id="CLU_289778_0_0_1"/>
<dbReference type="InParanoid" id="Q8IC32"/>
<dbReference type="OrthoDB" id="377880at2759"/>
<dbReference type="PhylomeDB" id="Q8IC32"/>
<dbReference type="Proteomes" id="UP000001450">
    <property type="component" value="Chromosome 7"/>
</dbReference>
<organism>
    <name type="scientific">Plasmodium falciparum (isolate 3D7)</name>
    <dbReference type="NCBI Taxonomy" id="36329"/>
    <lineage>
        <taxon>Eukaryota</taxon>
        <taxon>Sar</taxon>
        <taxon>Alveolata</taxon>
        <taxon>Apicomplexa</taxon>
        <taxon>Aconoidasida</taxon>
        <taxon>Haemosporida</taxon>
        <taxon>Plasmodiidae</taxon>
        <taxon>Plasmodium</taxon>
        <taxon>Plasmodium (Laverania)</taxon>
    </lineage>
</organism>
<reference key="1">
    <citation type="journal article" date="2002" name="Nature">
        <title>Genome sequence of the human malaria parasite Plasmodium falciparum.</title>
        <authorList>
            <person name="Gardner M.J."/>
            <person name="Hall N."/>
            <person name="Fung E."/>
            <person name="White O."/>
            <person name="Berriman M."/>
            <person name="Hyman R.W."/>
            <person name="Carlton J.M."/>
            <person name="Pain A."/>
            <person name="Nelson K.E."/>
            <person name="Bowman S."/>
            <person name="Paulsen I.T."/>
            <person name="James K.D."/>
            <person name="Eisen J.A."/>
            <person name="Rutherford K.M."/>
            <person name="Salzberg S.L."/>
            <person name="Craig A."/>
            <person name="Kyes S."/>
            <person name="Chan M.-S."/>
            <person name="Nene V."/>
            <person name="Shallom S.J."/>
            <person name="Suh B."/>
            <person name="Peterson J."/>
            <person name="Angiuoli S."/>
            <person name="Pertea M."/>
            <person name="Allen J."/>
            <person name="Selengut J."/>
            <person name="Haft D."/>
            <person name="Mather M.W."/>
            <person name="Vaidya A.B."/>
            <person name="Martin D.M.A."/>
            <person name="Fairlamb A.H."/>
            <person name="Fraunholz M.J."/>
            <person name="Roos D.S."/>
            <person name="Ralph S.A."/>
            <person name="McFadden G.I."/>
            <person name="Cummings L.M."/>
            <person name="Subramanian G.M."/>
            <person name="Mungall C."/>
            <person name="Venter J.C."/>
            <person name="Carucci D.J."/>
            <person name="Hoffman S.L."/>
            <person name="Newbold C."/>
            <person name="Davis R.W."/>
            <person name="Fraser C.M."/>
            <person name="Barrell B.G."/>
        </authorList>
    </citation>
    <scope>NUCLEOTIDE SEQUENCE [LARGE SCALE GENOMIC DNA]</scope>
    <source>
        <strain>3D7</strain>
    </source>
</reference>
<reference key="2">
    <citation type="journal article" date="2002" name="Nature">
        <title>Sequence of Plasmodium falciparum chromosomes 1, 3-9 and 13.</title>
        <authorList>
            <person name="Hall N."/>
            <person name="Pain A."/>
            <person name="Berriman M."/>
            <person name="Churcher C.M."/>
            <person name="Harris B."/>
            <person name="Harris D."/>
            <person name="Mungall K.L."/>
            <person name="Bowman S."/>
            <person name="Atkin R."/>
            <person name="Baker S."/>
            <person name="Barron A."/>
            <person name="Brooks K."/>
            <person name="Buckee C.O."/>
            <person name="Burrows C."/>
            <person name="Cherevach I."/>
            <person name="Chillingworth C."/>
            <person name="Chillingworth T."/>
            <person name="Christodoulou Z."/>
            <person name="Clark L."/>
            <person name="Clark R."/>
            <person name="Corton C."/>
            <person name="Cronin A."/>
            <person name="Davies R.M."/>
            <person name="Davis P."/>
            <person name="Dear P."/>
            <person name="Dearden F."/>
            <person name="Doggett J."/>
            <person name="Feltwell T."/>
            <person name="Goble A."/>
            <person name="Goodhead I."/>
            <person name="Gwilliam R."/>
            <person name="Hamlin N."/>
            <person name="Hance Z."/>
            <person name="Harper D."/>
            <person name="Hauser H."/>
            <person name="Hornsby T."/>
            <person name="Holroyd S."/>
            <person name="Horrocks P."/>
            <person name="Humphray S."/>
            <person name="Jagels K."/>
            <person name="James K.D."/>
            <person name="Johnson D."/>
            <person name="Kerhornou A."/>
            <person name="Knights A."/>
            <person name="Konfortov B."/>
            <person name="Kyes S."/>
            <person name="Larke N."/>
            <person name="Lawson D."/>
            <person name="Lennard N."/>
            <person name="Line A."/>
            <person name="Maddison M."/>
            <person name="Mclean J."/>
            <person name="Mooney P."/>
            <person name="Moule S."/>
            <person name="Murphy L."/>
            <person name="Oliver K."/>
            <person name="Ormond D."/>
            <person name="Price C."/>
            <person name="Quail M.A."/>
            <person name="Rabbinowitsch E."/>
            <person name="Rajandream M.A."/>
            <person name="Rutter S."/>
            <person name="Rutherford K.M."/>
            <person name="Sanders M."/>
            <person name="Simmonds M."/>
            <person name="Seeger K."/>
            <person name="Sharp S."/>
            <person name="Smith R."/>
            <person name="Squares R."/>
            <person name="Squares S."/>
            <person name="Stevens K."/>
            <person name="Taylor K."/>
            <person name="Tivey A."/>
            <person name="Unwin L."/>
            <person name="Whitehead S."/>
            <person name="Woodward J.R."/>
            <person name="Sulston J.E."/>
            <person name="Craig A."/>
            <person name="Newbold C."/>
            <person name="Barrell B.G."/>
        </authorList>
    </citation>
    <scope>NUCLEOTIDE SEQUENCE [LARGE SCALE GENOMIC DNA]</scope>
    <source>
        <strain>3D7</strain>
    </source>
</reference>
<reference evidence="4" key="3">
    <citation type="journal article" date="2007" name="PLoS ONE">
        <title>Rapid identification of malaria vaccine candidates based on alpha-helical coiled coil protein motif.</title>
        <authorList>
            <person name="Villard V."/>
            <person name="Agak G.W."/>
            <person name="Frank G."/>
            <person name="Jafarshad A."/>
            <person name="Servis C."/>
            <person name="Nebie I."/>
            <person name="Sirima S.B."/>
            <person name="Felger I."/>
            <person name="Arevalo-Herrera M."/>
            <person name="Herrera S."/>
            <person name="Heitz F."/>
            <person name="Baecker V."/>
            <person name="Druilhe P."/>
            <person name="Kajava A.V."/>
            <person name="Corradin G."/>
        </authorList>
    </citation>
    <scope>SYNTHESIS OF 129-167</scope>
    <scope>POSSIBLE CANDIDATE MALARIA EPITOPE</scope>
</reference>
<accession>Q8IC32</accession>
<accession>A0A5K1K890</accession>